<name>CMTA2_ARATH</name>
<gene>
    <name evidence="16" type="primary">CAMTA2</name>
    <name evidence="18" type="synonym">CMTA2</name>
    <name evidence="17" type="synonym">SR4</name>
    <name evidence="20" type="ordered locus">At5g64220</name>
    <name evidence="21" type="ORF">MSJ1.6</name>
</gene>
<reference key="1">
    <citation type="journal article" date="1997" name="DNA Res.">
        <title>Structural analysis of Arabidopsis thaliana chromosome 5. III. Sequence features of the regions of 1,191,918 bp covered by seventeen physically assigned P1 clones.</title>
        <authorList>
            <person name="Nakamura Y."/>
            <person name="Sato S."/>
            <person name="Kaneko T."/>
            <person name="Kotani H."/>
            <person name="Asamizu E."/>
            <person name="Miyajima N."/>
            <person name="Tabata S."/>
        </authorList>
    </citation>
    <scope>NUCLEOTIDE SEQUENCE [LARGE SCALE GENOMIC DNA]</scope>
    <source>
        <strain>cv. Columbia</strain>
    </source>
</reference>
<reference key="2">
    <citation type="journal article" date="2017" name="Plant J.">
        <title>Araport11: a complete reannotation of the Arabidopsis thaliana reference genome.</title>
        <authorList>
            <person name="Cheng C.Y."/>
            <person name="Krishnakumar V."/>
            <person name="Chan A.P."/>
            <person name="Thibaud-Nissen F."/>
            <person name="Schobel S."/>
            <person name="Town C.D."/>
        </authorList>
    </citation>
    <scope>GENOME REANNOTATION</scope>
    <source>
        <strain>cv. Columbia</strain>
    </source>
</reference>
<reference key="3">
    <citation type="submission" date="2003-12" db="EMBL/GenBank/DDBJ databases">
        <title>Arabidopsis ORF clones.</title>
        <authorList>
            <person name="Kim C.J."/>
            <person name="Chen H."/>
            <person name="Cheuk R.F."/>
            <person name="Shinn P."/>
            <person name="Carninci P."/>
            <person name="Hayashizaki Y."/>
            <person name="Ishida J."/>
            <person name="Kamiya A."/>
            <person name="Kawai J."/>
            <person name="Narusaka M."/>
            <person name="Sakurai T."/>
            <person name="Satou M."/>
            <person name="Seki M."/>
            <person name="Shinozaki K."/>
            <person name="Ecker J.R."/>
        </authorList>
    </citation>
    <scope>NUCLEOTIDE SEQUENCE [LARGE SCALE MRNA]</scope>
    <source>
        <strain>cv. Columbia</strain>
    </source>
</reference>
<reference key="4">
    <citation type="submission" date="2006-07" db="EMBL/GenBank/DDBJ databases">
        <title>Large-scale analysis of RIKEN Arabidopsis full-length (RAFL) cDNAs.</title>
        <authorList>
            <person name="Totoki Y."/>
            <person name="Seki M."/>
            <person name="Ishida J."/>
            <person name="Nakajima M."/>
            <person name="Enju A."/>
            <person name="Kamiya A."/>
            <person name="Narusaka M."/>
            <person name="Shin-i T."/>
            <person name="Nakagawa M."/>
            <person name="Sakamoto N."/>
            <person name="Oishi K."/>
            <person name="Kohara Y."/>
            <person name="Kobayashi M."/>
            <person name="Toyoda A."/>
            <person name="Sakaki Y."/>
            <person name="Sakurai T."/>
            <person name="Iida K."/>
            <person name="Akiyama K."/>
            <person name="Satou M."/>
            <person name="Toyoda T."/>
            <person name="Konagaya A."/>
            <person name="Carninci P."/>
            <person name="Kawai J."/>
            <person name="Hayashizaki Y."/>
            <person name="Shinozaki K."/>
        </authorList>
    </citation>
    <scope>NUCLEOTIDE SEQUENCE [LARGE SCALE MRNA]</scope>
    <source>
        <strain>cv. Columbia</strain>
    </source>
</reference>
<reference key="5">
    <citation type="submission" date="2009-03" db="EMBL/GenBank/DDBJ databases">
        <title>ORF cloning and analysis of Arabidopsis transcription factor genes.</title>
        <authorList>
            <person name="Fujita M."/>
            <person name="Mizukado S."/>
            <person name="Seki M."/>
            <person name="Shinozaki K."/>
            <person name="Mitsuda N."/>
            <person name="Takiguchi Y."/>
            <person name="Takagi M."/>
        </authorList>
    </citation>
    <scope>NUCLEOTIDE SEQUENCE [LARGE SCALE MRNA]</scope>
</reference>
<reference key="6">
    <citation type="journal article" date="2002" name="J. Biol. Chem.">
        <title>A novel family of calmodulin-binding transcription activators in multicellular organisms.</title>
        <authorList>
            <person name="Bouche N."/>
            <person name="Scharlat A."/>
            <person name="Snedden W."/>
            <person name="Bouchez D."/>
            <person name="Fromm H."/>
        </authorList>
    </citation>
    <scope>FUNCTION</scope>
    <scope>GENE FAMILY</scope>
    <scope>NOMENCLATURE</scope>
</reference>
<reference key="7">
    <citation type="journal article" date="2002" name="J. Biol. Chem.">
        <title>A calmodulin-binding/CGCG box DNA-binding protein family involved in multiple signaling pathways in plants.</title>
        <authorList>
            <person name="Yang T."/>
            <person name="Poovaiah B.W."/>
        </authorList>
    </citation>
    <scope>INDUCTION</scope>
    <scope>TISSUE SPECIFICITY</scope>
</reference>
<reference key="8">
    <citation type="journal article" date="2003" name="Plant Cell Physiol.">
        <title>Arabidopsis CAMTA family proteins enhance V-PPase expression in pollen.</title>
        <authorList>
            <person name="Mitsuda N."/>
            <person name="Isono T."/>
            <person name="Sato M.H."/>
        </authorList>
    </citation>
    <scope>TISSUE SPECIFICITY</scope>
</reference>
<reference key="9">
    <citation type="journal article" date="2000" name="Biochem. Biophys. Res. Commun.">
        <title>A calmodulin binding protein from Arabidopsis is induced by ethylene and contains a DNA-binding motif.</title>
        <authorList>
            <person name="Reddy A.S.N."/>
            <person name="Reddy V.S."/>
            <person name="Golovkin M."/>
        </authorList>
    </citation>
    <scope>IDENTIFICATION</scope>
</reference>
<reference key="10">
    <citation type="journal article" date="2002" name="J. Biol. Chem.">
        <title>Genes encoding calmodulin-binding proteins in the Arabidopsis genome.</title>
        <authorList>
            <person name="Reddy V.S."/>
            <person name="Ali G.S."/>
            <person name="Reddy A.S.N."/>
        </authorList>
    </citation>
    <scope>IDENTIFICATION</scope>
</reference>
<reference key="11">
    <citation type="journal article" date="2009" name="J. Proteomics">
        <title>Phosphoproteomic analysis of nuclei-enriched fractions from Arabidopsis thaliana.</title>
        <authorList>
            <person name="Jones A.M.E."/>
            <person name="MacLean D."/>
            <person name="Studholme D.J."/>
            <person name="Serna-Sanz A."/>
            <person name="Andreasson E."/>
            <person name="Rathjen J.P."/>
            <person name="Peck S.C."/>
        </authorList>
    </citation>
    <scope>SUBCELLULAR LOCATION</scope>
    <scope>PHOSPHORYLATION [LARGE SCALE ANALYSIS] AT SER-984</scope>
    <scope>IDENTIFICATION BY MASS SPECTROMETRY [LARGE SCALE ANALYSIS]</scope>
    <source>
        <strain>cv. Columbia</strain>
    </source>
</reference>
<reference key="12">
    <citation type="journal article" date="2009" name="Plant Physiol.">
        <title>Large-scale Arabidopsis phosphoproteome profiling reveals novel chloroplast kinase substrates and phosphorylation networks.</title>
        <authorList>
            <person name="Reiland S."/>
            <person name="Messerli G."/>
            <person name="Baerenfaller K."/>
            <person name="Gerrits B."/>
            <person name="Endler A."/>
            <person name="Grossmann J."/>
            <person name="Gruissem W."/>
            <person name="Baginsky S."/>
        </authorList>
    </citation>
    <scope>PHOSPHORYLATION [LARGE SCALE ANALYSIS] AT SER-984</scope>
    <scope>IDENTIFICATION BY MASS SPECTROMETRY [LARGE SCALE ANALYSIS]</scope>
</reference>
<reference key="13">
    <citation type="journal article" date="2013" name="Plant J.">
        <title>Roles of CAMTA transcription factors and salicylic acid in configuring the low-temperature transcriptome and freezing tolerance of Arabidopsis.</title>
        <authorList>
            <person name="Kim Y."/>
            <person name="Park S."/>
            <person name="Gilmour S.J."/>
            <person name="Thomashow M.F."/>
        </authorList>
    </citation>
    <scope>FUNCTION</scope>
    <scope>DISRUPTION PHENOTYPE</scope>
</reference>
<reference key="14">
    <citation type="journal article" date="2014" name="Plant J.">
        <title>A key general stress response motif is regulated non-uniformly by CAMTA transcription factors.</title>
        <authorList>
            <person name="Benn G."/>
            <person name="Wang C.Q."/>
            <person name="Hicks D.R."/>
            <person name="Stein J."/>
            <person name="Guthrie C."/>
            <person name="Dehesh K."/>
        </authorList>
    </citation>
    <scope>FUNCTION</scope>
</reference>
<reference key="15">
    <citation type="journal article" date="2015" name="Plant Physiol.">
        <title>SENSITIVE TO PROTON RHIZOTOXICITY1, CALMODULIN BINDING TRANSCRIPTION ACTIVATOR2, and other transcription factors are involved in ALUMINUM-ACTIVATED MALATE TRANSPORTER1 expression.</title>
        <authorList>
            <person name="Tokizawa M."/>
            <person name="Kobayashi Y."/>
            <person name="Saito T."/>
            <person name="Kobayashi M."/>
            <person name="Iuchi S."/>
            <person name="Nomoto M."/>
            <person name="Tada Y."/>
            <person name="Yamamoto Y.Y."/>
            <person name="Koyama H."/>
        </authorList>
    </citation>
    <scope>FUNCTION</scope>
    <scope>INDUCTION BY ALUMINUM</scope>
</reference>
<reference key="16">
    <citation type="journal article" date="2017" name="Plant Cell">
        <title>Different cold-signaling pathways function in the responses to rapid and gradual decreases in temperature.</title>
        <authorList>
            <person name="Kidokoro S."/>
            <person name="Yoneda K."/>
            <person name="Takasaki H."/>
            <person name="Takahashi F."/>
            <person name="Shinozaki K."/>
            <person name="Yamaguchi-Shinozaki K."/>
        </authorList>
    </citation>
    <scope>SUBCELLULAR LOCATION</scope>
</reference>
<proteinExistence type="evidence at protein level"/>
<feature type="chain" id="PRO_0000114487" description="Calmodulin-binding transcription activator 2">
    <location>
        <begin position="1"/>
        <end position="1050"/>
    </location>
</feature>
<feature type="repeat" description="ANK 1">
    <location>
        <begin position="661"/>
        <end position="690"/>
    </location>
</feature>
<feature type="repeat" description="ANK 2">
    <location>
        <begin position="694"/>
        <end position="723"/>
    </location>
</feature>
<feature type="domain" description="IQ 1" evidence="4">
    <location>
        <begin position="870"/>
        <end position="899"/>
    </location>
</feature>
<feature type="domain" description="IQ 2" evidence="4">
    <location>
        <begin position="893"/>
        <end position="922"/>
    </location>
</feature>
<feature type="DNA-binding region" description="CG-1" evidence="5">
    <location>
        <begin position="15"/>
        <end position="141"/>
    </location>
</feature>
<feature type="region of interest" description="Disordered" evidence="6">
    <location>
        <begin position="141"/>
        <end position="196"/>
    </location>
</feature>
<feature type="region of interest" description="Disordered" evidence="6">
    <location>
        <begin position="223"/>
        <end position="246"/>
    </location>
</feature>
<feature type="region of interest" description="Calmodulin-binding" evidence="2">
    <location>
        <begin position="918"/>
        <end position="940"/>
    </location>
</feature>
<feature type="coiled-coil region" evidence="3">
    <location>
        <begin position="957"/>
        <end position="985"/>
    </location>
</feature>
<feature type="compositionally biased region" description="Polar residues" evidence="6">
    <location>
        <begin position="141"/>
        <end position="171"/>
    </location>
</feature>
<feature type="compositionally biased region" description="Polar residues" evidence="6">
    <location>
        <begin position="183"/>
        <end position="196"/>
    </location>
</feature>
<feature type="modified residue" description="Phosphoserine" evidence="22 23">
    <location>
        <position position="984"/>
    </location>
</feature>
<organism>
    <name type="scientific">Arabidopsis thaliana</name>
    <name type="common">Mouse-ear cress</name>
    <dbReference type="NCBI Taxonomy" id="3702"/>
    <lineage>
        <taxon>Eukaryota</taxon>
        <taxon>Viridiplantae</taxon>
        <taxon>Streptophyta</taxon>
        <taxon>Embryophyta</taxon>
        <taxon>Tracheophyta</taxon>
        <taxon>Spermatophyta</taxon>
        <taxon>Magnoliopsida</taxon>
        <taxon>eudicotyledons</taxon>
        <taxon>Gunneridae</taxon>
        <taxon>Pentapetalae</taxon>
        <taxon>rosids</taxon>
        <taxon>malvids</taxon>
        <taxon>Brassicales</taxon>
        <taxon>Brassicaceae</taxon>
        <taxon>Camelineae</taxon>
        <taxon>Arabidopsis</taxon>
    </lineage>
</organism>
<accession>Q6NPP4</accession>
<accession>Q0WNN4</accession>
<accession>Q9FMG3</accession>
<comment type="function">
    <text evidence="1 10 11 12 19">Transcription activator that binds to the DNA consensus sequence 5'-[ACG]CGCG[GTC]-3' (By similarity). Regulates transcriptional activity in response to calcium signals (Probable). Binds calmodulin in a calcium-dependent manner (By similarity). Involved in freezing tolerance in association with CAMTA1 and CAMTA3. Contributes together with CAMTA1 and CAMTA3 to the positive regulation of the cold-induced expression of DREB1A/CBF3, DREB1B/CBF1 and DREB1C/CBF2 (PubMed:23581962). Involved together with CAMTA3 and CAMTA4 in the positive regulation of a general stress response (PubMed:25039701). Involved in tolerance to aluminum. Binds to the promoter of ALMT1 transporter and contributes to the positive regulation of aluminum-induced expression of ALMT1 (PubMed:25627216).</text>
</comment>
<comment type="subcellular location">
    <subcellularLocation>
        <location evidence="5 9 13">Nucleus</location>
    </subcellularLocation>
</comment>
<comment type="tissue specificity">
    <text evidence="7 8">Expressed in roots, stems, old leaves, petals, sepals, top of carpels, stigmas, stamen filaments, anthers and siliques, but not in pollen.</text>
</comment>
<comment type="induction">
    <text evidence="7 12">By salt, wounding, abscisic acid, H(2)O(2) and salicylic acid (PubMed:12218065). Induced by aluminum (PubMed:25627216).</text>
</comment>
<comment type="disruption phenotype">
    <text evidence="10">No visible phenotype under normal growth conditions, but the double mutants camt2 and camt3 exhibit dwarf phenotypes.</text>
</comment>
<comment type="similarity">
    <text evidence="18">Belongs to the CAMTA family.</text>
</comment>
<comment type="sequence caution" evidence="18">
    <conflict type="erroneous gene model prediction">
        <sequence resource="EMBL-CDS" id="BAB09853"/>
    </conflict>
</comment>
<keyword id="KW-0010">Activator</keyword>
<keyword id="KW-0040">ANK repeat</keyword>
<keyword id="KW-0106">Calcium</keyword>
<keyword id="KW-0112">Calmodulin-binding</keyword>
<keyword id="KW-0175">Coiled coil</keyword>
<keyword id="KW-0238">DNA-binding</keyword>
<keyword id="KW-0539">Nucleus</keyword>
<keyword id="KW-0597">Phosphoprotein</keyword>
<keyword id="KW-1185">Reference proteome</keyword>
<keyword id="KW-0677">Repeat</keyword>
<keyword id="KW-0346">Stress response</keyword>
<keyword id="KW-0804">Transcription</keyword>
<keyword id="KW-0805">Transcription regulation</keyword>
<protein>
    <recommendedName>
        <fullName evidence="16">Calmodulin-binding transcription activator 2</fullName>
        <shortName evidence="16">AtCAMTA2</shortName>
    </recommendedName>
    <alternativeName>
        <fullName evidence="14">AtER66</fullName>
    </alternativeName>
    <alternativeName>
        <fullName evidence="15">Ethylene-induced calmodulin-binding protein c</fullName>
        <shortName evidence="15">EICBP.c</shortName>
    </alternativeName>
    <alternativeName>
        <fullName evidence="17">Signal-responsive protein 4</fullName>
        <shortName evidence="17">AtSR4</shortName>
    </alternativeName>
</protein>
<dbReference type="EMBL" id="AB008268">
    <property type="protein sequence ID" value="BAB09853.1"/>
    <property type="status" value="ALT_SEQ"/>
    <property type="molecule type" value="Genomic_DNA"/>
</dbReference>
<dbReference type="EMBL" id="CP002688">
    <property type="protein sequence ID" value="AED97856.1"/>
    <property type="molecule type" value="Genomic_DNA"/>
</dbReference>
<dbReference type="EMBL" id="CP002688">
    <property type="protein sequence ID" value="AED97857.1"/>
    <property type="molecule type" value="Genomic_DNA"/>
</dbReference>
<dbReference type="EMBL" id="BT010874">
    <property type="protein sequence ID" value="AAR24652.1"/>
    <property type="molecule type" value="mRNA"/>
</dbReference>
<dbReference type="EMBL" id="AK229403">
    <property type="protein sequence ID" value="BAF01265.1"/>
    <property type="molecule type" value="mRNA"/>
</dbReference>
<dbReference type="EMBL" id="AB493811">
    <property type="protein sequence ID" value="BAH30649.1"/>
    <property type="molecule type" value="mRNA"/>
</dbReference>
<dbReference type="RefSeq" id="NP_001032135.1">
    <property type="nucleotide sequence ID" value="NM_001037058.2"/>
</dbReference>
<dbReference type="RefSeq" id="NP_201227.3">
    <property type="nucleotide sequence ID" value="NM_125818.3"/>
</dbReference>
<dbReference type="FunCoup" id="Q6NPP4">
    <property type="interactions" value="2469"/>
</dbReference>
<dbReference type="STRING" id="3702.Q6NPP4"/>
<dbReference type="iPTMnet" id="Q6NPP4"/>
<dbReference type="PaxDb" id="3702-AT5G64220.2"/>
<dbReference type="ProteomicsDB" id="220479"/>
<dbReference type="EnsemblPlants" id="AT5G64220.1">
    <property type="protein sequence ID" value="AT5G64220.1"/>
    <property type="gene ID" value="AT5G64220"/>
</dbReference>
<dbReference type="EnsemblPlants" id="AT5G64220.2">
    <property type="protein sequence ID" value="AT5G64220.2"/>
    <property type="gene ID" value="AT5G64220"/>
</dbReference>
<dbReference type="GeneID" id="836543"/>
<dbReference type="Gramene" id="AT5G64220.1">
    <property type="protein sequence ID" value="AT5G64220.1"/>
    <property type="gene ID" value="AT5G64220"/>
</dbReference>
<dbReference type="Gramene" id="AT5G64220.2">
    <property type="protein sequence ID" value="AT5G64220.2"/>
    <property type="gene ID" value="AT5G64220"/>
</dbReference>
<dbReference type="KEGG" id="ath:AT5G64220"/>
<dbReference type="Araport" id="AT5G64220"/>
<dbReference type="TAIR" id="AT5G64220">
    <property type="gene designation" value="CAMTA2"/>
</dbReference>
<dbReference type="eggNOG" id="KOG0520">
    <property type="taxonomic scope" value="Eukaryota"/>
</dbReference>
<dbReference type="HOGENOM" id="CLU_005708_1_0_1"/>
<dbReference type="InParanoid" id="Q6NPP4"/>
<dbReference type="OMA" id="NSLARYQ"/>
<dbReference type="PhylomeDB" id="Q6NPP4"/>
<dbReference type="PRO" id="PR:Q6NPP4"/>
<dbReference type="Proteomes" id="UP000006548">
    <property type="component" value="Chromosome 5"/>
</dbReference>
<dbReference type="ExpressionAtlas" id="Q6NPP4">
    <property type="expression patterns" value="baseline and differential"/>
</dbReference>
<dbReference type="GO" id="GO:0005634">
    <property type="term" value="C:nucleus"/>
    <property type="evidence" value="ECO:0000314"/>
    <property type="project" value="UniProtKB"/>
</dbReference>
<dbReference type="GO" id="GO:0005516">
    <property type="term" value="F:calmodulin binding"/>
    <property type="evidence" value="ECO:0007669"/>
    <property type="project" value="UniProtKB-KW"/>
</dbReference>
<dbReference type="GO" id="GO:0003700">
    <property type="term" value="F:DNA-binding transcription factor activity"/>
    <property type="evidence" value="ECO:0000314"/>
    <property type="project" value="TAIR"/>
</dbReference>
<dbReference type="GO" id="GO:0000976">
    <property type="term" value="F:transcription cis-regulatory region binding"/>
    <property type="evidence" value="ECO:0000353"/>
    <property type="project" value="TAIR"/>
</dbReference>
<dbReference type="GO" id="GO:0071275">
    <property type="term" value="P:cellular response to aluminum ion"/>
    <property type="evidence" value="ECO:0000270"/>
    <property type="project" value="TAIR"/>
</dbReference>
<dbReference type="GO" id="GO:0045893">
    <property type="term" value="P:positive regulation of DNA-templated transcription"/>
    <property type="evidence" value="ECO:0000315"/>
    <property type="project" value="TAIR"/>
</dbReference>
<dbReference type="GO" id="GO:0006355">
    <property type="term" value="P:regulation of DNA-templated transcription"/>
    <property type="evidence" value="ECO:0000304"/>
    <property type="project" value="TAIR"/>
</dbReference>
<dbReference type="GO" id="GO:0009409">
    <property type="term" value="P:response to cold"/>
    <property type="evidence" value="ECO:0000315"/>
    <property type="project" value="TAIR"/>
</dbReference>
<dbReference type="CDD" id="cd23767">
    <property type="entry name" value="IQCD"/>
    <property type="match status" value="1"/>
</dbReference>
<dbReference type="FunFam" id="1.20.5.190:FF:000003">
    <property type="entry name" value="Calmodulin-binding transcription activator 2"/>
    <property type="match status" value="1"/>
</dbReference>
<dbReference type="FunFam" id="1.25.40.20:FF:000326">
    <property type="entry name" value="Calmodulin-binding transcription activator 2"/>
    <property type="match status" value="1"/>
</dbReference>
<dbReference type="FunFam" id="2.60.40.10:FF:000314">
    <property type="entry name" value="Calmodulin-binding transcription activator 2"/>
    <property type="match status" value="1"/>
</dbReference>
<dbReference type="Gene3D" id="1.20.5.190">
    <property type="match status" value="1"/>
</dbReference>
<dbReference type="Gene3D" id="1.25.40.20">
    <property type="entry name" value="Ankyrin repeat-containing domain"/>
    <property type="match status" value="1"/>
</dbReference>
<dbReference type="Gene3D" id="2.60.40.10">
    <property type="entry name" value="Immunoglobulins"/>
    <property type="match status" value="1"/>
</dbReference>
<dbReference type="InterPro" id="IPR002110">
    <property type="entry name" value="Ankyrin_rpt"/>
</dbReference>
<dbReference type="InterPro" id="IPR036770">
    <property type="entry name" value="Ankyrin_rpt-contain_sf"/>
</dbReference>
<dbReference type="InterPro" id="IPR005559">
    <property type="entry name" value="CG-1_dom"/>
</dbReference>
<dbReference type="InterPro" id="IPR013783">
    <property type="entry name" value="Ig-like_fold"/>
</dbReference>
<dbReference type="InterPro" id="IPR014756">
    <property type="entry name" value="Ig_E-set"/>
</dbReference>
<dbReference type="InterPro" id="IPR000048">
    <property type="entry name" value="IQ_motif_EF-hand-BS"/>
</dbReference>
<dbReference type="InterPro" id="IPR027417">
    <property type="entry name" value="P-loop_NTPase"/>
</dbReference>
<dbReference type="PANTHER" id="PTHR23335:SF45">
    <property type="entry name" value="CALMODULIN-BINDING TRANSCRIPTION ACTIVATOR 2"/>
    <property type="match status" value="1"/>
</dbReference>
<dbReference type="PANTHER" id="PTHR23335">
    <property type="entry name" value="CALMODULIN-BINDING TRANSCRIPTION ACTIVATOR CAMTA"/>
    <property type="match status" value="1"/>
</dbReference>
<dbReference type="Pfam" id="PF12796">
    <property type="entry name" value="Ank_2"/>
    <property type="match status" value="1"/>
</dbReference>
<dbReference type="Pfam" id="PF03859">
    <property type="entry name" value="CG-1"/>
    <property type="match status" value="1"/>
</dbReference>
<dbReference type="Pfam" id="PF00612">
    <property type="entry name" value="IQ"/>
    <property type="match status" value="2"/>
</dbReference>
<dbReference type="SMART" id="SM00248">
    <property type="entry name" value="ANK"/>
    <property type="match status" value="2"/>
</dbReference>
<dbReference type="SMART" id="SM01076">
    <property type="entry name" value="CG-1"/>
    <property type="match status" value="1"/>
</dbReference>
<dbReference type="SMART" id="SM00015">
    <property type="entry name" value="IQ"/>
    <property type="match status" value="2"/>
</dbReference>
<dbReference type="SUPFAM" id="SSF48403">
    <property type="entry name" value="Ankyrin repeat"/>
    <property type="match status" value="1"/>
</dbReference>
<dbReference type="SUPFAM" id="SSF81296">
    <property type="entry name" value="E set domains"/>
    <property type="match status" value="1"/>
</dbReference>
<dbReference type="SUPFAM" id="SSF52540">
    <property type="entry name" value="P-loop containing nucleoside triphosphate hydrolases"/>
    <property type="match status" value="1"/>
</dbReference>
<dbReference type="PROSITE" id="PS50297">
    <property type="entry name" value="ANK_REP_REGION"/>
    <property type="match status" value="1"/>
</dbReference>
<dbReference type="PROSITE" id="PS50088">
    <property type="entry name" value="ANK_REPEAT"/>
    <property type="match status" value="2"/>
</dbReference>
<dbReference type="PROSITE" id="PS51437">
    <property type="entry name" value="CG_1"/>
    <property type="match status" value="1"/>
</dbReference>
<dbReference type="PROSITE" id="PS50096">
    <property type="entry name" value="IQ"/>
    <property type="match status" value="2"/>
</dbReference>
<evidence type="ECO:0000250" key="1">
    <source>
        <dbReference type="UniProtKB" id="Q8GSA7"/>
    </source>
</evidence>
<evidence type="ECO:0000250" key="2">
    <source>
        <dbReference type="UniProtKB" id="Q9FY74"/>
    </source>
</evidence>
<evidence type="ECO:0000255" key="3"/>
<evidence type="ECO:0000255" key="4">
    <source>
        <dbReference type="PROSITE-ProRule" id="PRU00116"/>
    </source>
</evidence>
<evidence type="ECO:0000255" key="5">
    <source>
        <dbReference type="PROSITE-ProRule" id="PRU00767"/>
    </source>
</evidence>
<evidence type="ECO:0000256" key="6">
    <source>
        <dbReference type="SAM" id="MobiDB-lite"/>
    </source>
</evidence>
<evidence type="ECO:0000269" key="7">
    <source>
    </source>
</evidence>
<evidence type="ECO:0000269" key="8">
    <source>
    </source>
</evidence>
<evidence type="ECO:0000269" key="9">
    <source>
    </source>
</evidence>
<evidence type="ECO:0000269" key="10">
    <source>
    </source>
</evidence>
<evidence type="ECO:0000269" key="11">
    <source>
    </source>
</evidence>
<evidence type="ECO:0000269" key="12">
    <source>
    </source>
</evidence>
<evidence type="ECO:0000269" key="13">
    <source>
    </source>
</evidence>
<evidence type="ECO:0000303" key="14">
    <source>
    </source>
</evidence>
<evidence type="ECO:0000303" key="15">
    <source>
    </source>
</evidence>
<evidence type="ECO:0000303" key="16">
    <source>
    </source>
</evidence>
<evidence type="ECO:0000303" key="17">
    <source>
    </source>
</evidence>
<evidence type="ECO:0000305" key="18"/>
<evidence type="ECO:0000305" key="19">
    <source>
    </source>
</evidence>
<evidence type="ECO:0000312" key="20">
    <source>
        <dbReference type="Araport" id="AT5G64220"/>
    </source>
</evidence>
<evidence type="ECO:0000312" key="21">
    <source>
        <dbReference type="EMBL" id="BAB09853.1"/>
    </source>
</evidence>
<evidence type="ECO:0007744" key="22">
    <source>
    </source>
</evidence>
<evidence type="ECO:0007744" key="23">
    <source>
    </source>
</evidence>
<sequence>MADRGSFGFAPRLDIKQLLSEAQHRWLRPAEICEILRNHQKFHIASEPPNRPPSGSLFLFDRKVLRYFRKDGHNWRKKKDGKTVKEAHEKLKVGSIDVLHCYYAHGEDNENFQRRCYWMLEQDLMHIVFVHYLEVKGNRMSTSGTKENHSNSLSGTGSVNVDSTATRSSILSPLCEDADSGDSRQASSSLQQNPEPQTVVPQIMHHQNASTINSYNTTSVLGNRDGWTSAHGNRVKGSNSQRSGDVPAWDASFENSLARYQNLPYNAPLTQTQPSTFGLIPMEGKTEKGSLLTSEHLRNPLQSQVNWQTPVQESVPLQKWPMDSHSGMTDATDLALFGQGAHENFGTFSSLLGSQDQQSSSFQAPFTNNEAAYIPKLGPEDLIYEASANQTLPLRKALLKKEDSLKKVDSFSRWVSKELGEMEDLQMQSSSGGIAWTSVECENAAAGSSLSPSLSEDQRFTMIDFWPKWTQTDSEVEVMVIGTFLLSPQEVTSYSWSCMFGEVEVPADILVDGVLCCHAPPHEVGRVPFYITCSDRFSCSEVREFDFLPGSTRKLNATDIYGANTIETSLHLRFENLLALRCSVQEHHIFENVGEKRRKISKIMLLKDEKEPPLPGTIEKDLTELEAKERLIREEFEDKLYLWLIHKVTEEGKGPNILDEDGQGVLHLAAALGYDWAIKPILAAGVSINFRDANGWSALHWAAFSGREDTVAVLVSLGADAGALADPSPEHPLGKTAADLAYGNGHRGISGFLAESSLTSYLEKLTVDAKENSSADSSGAKAVLTVAERTATPMSYGDVPETLSMKDSLTAVLNATQAADRLHQVFRMQSFQRKQLSELGGDNKFDISDELAVSFAAAKTKKSGHSSGAVHAAAVQIQKKYRGWKKRKEFLLIRQRIVKIQAHVRGHQVRKQYRAIIWSVGLLEKIILRWRRKGSGLRGFKRDTISKPTEPVCPAPQEDDYDFLKEGRKQTEERLQKALTRVKSMAQYPEARAQYRRLLTVVEGFRENEASSSSALKNNTEEAANYNEEDDLIDIDSLLDDDTFMSLAFE</sequence>